<reference key="1">
    <citation type="journal article" date="2004" name="J. Mol. Microbiol. Biotechnol.">
        <title>The complete genome sequence of Bacillus licheniformis DSM13, an organism with great industrial potential.</title>
        <authorList>
            <person name="Veith B."/>
            <person name="Herzberg C."/>
            <person name="Steckel S."/>
            <person name="Feesche J."/>
            <person name="Maurer K.H."/>
            <person name="Ehrenreich P."/>
            <person name="Baeumer S."/>
            <person name="Henne A."/>
            <person name="Liesegang H."/>
            <person name="Merkl R."/>
            <person name="Ehrenreich A."/>
            <person name="Gottschalk G."/>
        </authorList>
    </citation>
    <scope>NUCLEOTIDE SEQUENCE [LARGE SCALE GENOMIC DNA]</scope>
    <source>
        <strain>ATCC 14580 / DSM 13 / JCM 2505 / CCUG 7422 / NBRC 12200 / NCIMB 9375 / NCTC 10341 / NRRL NRS-1264 / Gibson 46</strain>
    </source>
</reference>
<reference key="2">
    <citation type="journal article" date="2004" name="Genome Biol.">
        <title>Complete genome sequence of the industrial bacterium Bacillus licheniformis and comparisons with closely related Bacillus species.</title>
        <authorList>
            <person name="Rey M.W."/>
            <person name="Ramaiya P."/>
            <person name="Nelson B.A."/>
            <person name="Brody-Karpin S.D."/>
            <person name="Zaretsky E.J."/>
            <person name="Tang M."/>
            <person name="Lopez de Leon A."/>
            <person name="Xiang H."/>
            <person name="Gusti V."/>
            <person name="Clausen I.G."/>
            <person name="Olsen P.B."/>
            <person name="Rasmussen M.D."/>
            <person name="Andersen J.T."/>
            <person name="Joergensen P.L."/>
            <person name="Larsen T.S."/>
            <person name="Sorokin A."/>
            <person name="Bolotin A."/>
            <person name="Lapidus A."/>
            <person name="Galleron N."/>
            <person name="Ehrlich S.D."/>
            <person name="Berka R.M."/>
        </authorList>
    </citation>
    <scope>NUCLEOTIDE SEQUENCE [LARGE SCALE GENOMIC DNA]</scope>
    <source>
        <strain>ATCC 14580 / DSM 13 / JCM 2505 / CCUG 7422 / NBRC 12200 / NCIMB 9375 / NCTC 10341 / NRRL NRS-1264 / Gibson 46</strain>
    </source>
</reference>
<accession>Q65FR5</accession>
<accession>Q62R74</accession>
<evidence type="ECO:0000255" key="1">
    <source>
        <dbReference type="HAMAP-Rule" id="MF_00417"/>
    </source>
</evidence>
<organism>
    <name type="scientific">Bacillus licheniformis (strain ATCC 14580 / DSM 13 / JCM 2505 / CCUG 7422 / NBRC 12200 / NCIMB 9375 / NCTC 10341 / NRRL NRS-1264 / Gibson 46)</name>
    <dbReference type="NCBI Taxonomy" id="279010"/>
    <lineage>
        <taxon>Bacteria</taxon>
        <taxon>Bacillati</taxon>
        <taxon>Bacillota</taxon>
        <taxon>Bacilli</taxon>
        <taxon>Bacillales</taxon>
        <taxon>Bacillaceae</taxon>
        <taxon>Bacillus</taxon>
    </lineage>
</organism>
<dbReference type="EC" id="3.4.19.3" evidence="1"/>
<dbReference type="EMBL" id="CP000002">
    <property type="protein sequence ID" value="AAU24736.1"/>
    <property type="molecule type" value="Genomic_DNA"/>
</dbReference>
<dbReference type="EMBL" id="AE017333">
    <property type="protein sequence ID" value="AAU42099.1"/>
    <property type="molecule type" value="Genomic_DNA"/>
</dbReference>
<dbReference type="RefSeq" id="WP_003184683.1">
    <property type="nucleotide sequence ID" value="NC_006322.1"/>
</dbReference>
<dbReference type="SMR" id="Q65FR5"/>
<dbReference type="STRING" id="279010.BL02514"/>
<dbReference type="MEROPS" id="C15.001"/>
<dbReference type="GeneID" id="92860146"/>
<dbReference type="KEGG" id="bld:BLi03263"/>
<dbReference type="KEGG" id="bli:BL02514"/>
<dbReference type="PATRIC" id="fig|279010.13.peg.3312"/>
<dbReference type="eggNOG" id="COG2039">
    <property type="taxonomic scope" value="Bacteria"/>
</dbReference>
<dbReference type="HOGENOM" id="CLU_043960_4_0_9"/>
<dbReference type="Proteomes" id="UP000000606">
    <property type="component" value="Chromosome"/>
</dbReference>
<dbReference type="GO" id="GO:0005829">
    <property type="term" value="C:cytosol"/>
    <property type="evidence" value="ECO:0007669"/>
    <property type="project" value="InterPro"/>
</dbReference>
<dbReference type="GO" id="GO:0016920">
    <property type="term" value="F:pyroglutamyl-peptidase activity"/>
    <property type="evidence" value="ECO:0007669"/>
    <property type="project" value="UniProtKB-UniRule"/>
</dbReference>
<dbReference type="GO" id="GO:0006508">
    <property type="term" value="P:proteolysis"/>
    <property type="evidence" value="ECO:0007669"/>
    <property type="project" value="UniProtKB-KW"/>
</dbReference>
<dbReference type="CDD" id="cd00501">
    <property type="entry name" value="Peptidase_C15"/>
    <property type="match status" value="1"/>
</dbReference>
<dbReference type="FunFam" id="3.40.630.20:FF:000001">
    <property type="entry name" value="Pyrrolidone-carboxylate peptidase"/>
    <property type="match status" value="1"/>
</dbReference>
<dbReference type="Gene3D" id="3.40.630.20">
    <property type="entry name" value="Peptidase C15, pyroglutamyl peptidase I-like"/>
    <property type="match status" value="1"/>
</dbReference>
<dbReference type="HAMAP" id="MF_00417">
    <property type="entry name" value="Pyrrolid_peptidase"/>
    <property type="match status" value="1"/>
</dbReference>
<dbReference type="InterPro" id="IPR000816">
    <property type="entry name" value="Peptidase_C15"/>
</dbReference>
<dbReference type="InterPro" id="IPR016125">
    <property type="entry name" value="Peptidase_C15-like"/>
</dbReference>
<dbReference type="InterPro" id="IPR036440">
    <property type="entry name" value="Peptidase_C15-like_sf"/>
</dbReference>
<dbReference type="InterPro" id="IPR029762">
    <property type="entry name" value="PGP-I_bact-type"/>
</dbReference>
<dbReference type="InterPro" id="IPR033694">
    <property type="entry name" value="PGPEP1_Cys_AS"/>
</dbReference>
<dbReference type="InterPro" id="IPR033693">
    <property type="entry name" value="PGPEP1_Glu_AS"/>
</dbReference>
<dbReference type="NCBIfam" id="NF009676">
    <property type="entry name" value="PRK13197.1"/>
    <property type="match status" value="1"/>
</dbReference>
<dbReference type="NCBIfam" id="TIGR00504">
    <property type="entry name" value="pyro_pdase"/>
    <property type="match status" value="1"/>
</dbReference>
<dbReference type="PANTHER" id="PTHR23402">
    <property type="entry name" value="PROTEASE FAMILY C15 PYROGLUTAMYL-PEPTIDASE I-RELATED"/>
    <property type="match status" value="1"/>
</dbReference>
<dbReference type="PANTHER" id="PTHR23402:SF1">
    <property type="entry name" value="PYROGLUTAMYL-PEPTIDASE I"/>
    <property type="match status" value="1"/>
</dbReference>
<dbReference type="Pfam" id="PF01470">
    <property type="entry name" value="Peptidase_C15"/>
    <property type="match status" value="1"/>
</dbReference>
<dbReference type="PIRSF" id="PIRSF015592">
    <property type="entry name" value="Prld-crbxl_pptds"/>
    <property type="match status" value="1"/>
</dbReference>
<dbReference type="PRINTS" id="PR00706">
    <property type="entry name" value="PYROGLUPTASE"/>
</dbReference>
<dbReference type="SUPFAM" id="SSF53182">
    <property type="entry name" value="Pyrrolidone carboxyl peptidase (pyroglutamate aminopeptidase)"/>
    <property type="match status" value="1"/>
</dbReference>
<dbReference type="PROSITE" id="PS01334">
    <property type="entry name" value="PYRASE_CYS"/>
    <property type="match status" value="1"/>
</dbReference>
<dbReference type="PROSITE" id="PS01333">
    <property type="entry name" value="PYRASE_GLU"/>
    <property type="match status" value="1"/>
</dbReference>
<feature type="chain" id="PRO_1000050123" description="Pyrrolidone-carboxylate peptidase">
    <location>
        <begin position="1"/>
        <end position="215"/>
    </location>
</feature>
<feature type="active site" evidence="1">
    <location>
        <position position="81"/>
    </location>
</feature>
<feature type="active site" evidence="1">
    <location>
        <position position="144"/>
    </location>
</feature>
<feature type="active site" evidence="1">
    <location>
        <position position="168"/>
    </location>
</feature>
<keyword id="KW-0963">Cytoplasm</keyword>
<keyword id="KW-0378">Hydrolase</keyword>
<keyword id="KW-0645">Protease</keyword>
<keyword id="KW-1185">Reference proteome</keyword>
<keyword id="KW-0788">Thiol protease</keyword>
<proteinExistence type="inferred from homology"/>
<comment type="function">
    <text evidence="1">Removes 5-oxoproline from various penultimate amino acid residues except L-proline.</text>
</comment>
<comment type="catalytic activity">
    <reaction evidence="1">
        <text>Release of an N-terminal pyroglutamyl group from a polypeptide, the second amino acid generally not being Pro.</text>
        <dbReference type="EC" id="3.4.19.3"/>
    </reaction>
</comment>
<comment type="subunit">
    <text evidence="1">Homotetramer.</text>
</comment>
<comment type="subcellular location">
    <subcellularLocation>
        <location evidence="1">Cytoplasm</location>
    </subcellularLocation>
</comment>
<comment type="similarity">
    <text evidence="1">Belongs to the peptidase C15 family.</text>
</comment>
<protein>
    <recommendedName>
        <fullName evidence="1">Pyrrolidone-carboxylate peptidase</fullName>
        <ecNumber evidence="1">3.4.19.3</ecNumber>
    </recommendedName>
    <alternativeName>
        <fullName evidence="1">5-oxoprolyl-peptidase</fullName>
    </alternativeName>
    <alternativeName>
        <fullName evidence="1">Pyroglutamyl-peptidase I</fullName>
        <shortName evidence="1">PGP-I</shortName>
        <shortName evidence="1">Pyrase</shortName>
    </alternativeName>
</protein>
<sequence length="215" mass="23277">MGKKVLLTGFDPFGGETVNPSWEAVKRLNGEEAEGVSIAAEQIPTVFHHSAAVLKKAIEKHKPDVVICAGQAGGRAHITPERIAINIDDARIPDNEDREPIDEPIAADGPAAYWSALPIKLIVKELRKNGIPASVSNSAGTFVCNHLFYQLMHRIDRTSANIRGGFIHIPFLPEQTIDKPEPSLSLETIVEGLRIAAVISALHEKDIRETGGSIS</sequence>
<name>PCP_BACLD</name>
<gene>
    <name evidence="1" type="primary">pcp</name>
    <name type="ordered locus">BLi03263</name>
    <name type="ordered locus">BL02514</name>
</gene>